<reference key="1">
    <citation type="submission" date="2007-12" db="EMBL/GenBank/DDBJ databases">
        <title>Complete sequence of Methylobacterium extorquens PA1.</title>
        <authorList>
            <consortium name="US DOE Joint Genome Institute"/>
            <person name="Copeland A."/>
            <person name="Lucas S."/>
            <person name="Lapidus A."/>
            <person name="Barry K."/>
            <person name="Glavina del Rio T."/>
            <person name="Dalin E."/>
            <person name="Tice H."/>
            <person name="Pitluck S."/>
            <person name="Saunders E."/>
            <person name="Brettin T."/>
            <person name="Bruce D."/>
            <person name="Detter J.C."/>
            <person name="Han C."/>
            <person name="Schmutz J."/>
            <person name="Larimer F."/>
            <person name="Land M."/>
            <person name="Hauser L."/>
            <person name="Kyrpides N."/>
            <person name="Kim E."/>
            <person name="Marx C."/>
            <person name="Richardson P."/>
        </authorList>
    </citation>
    <scope>NUCLEOTIDE SEQUENCE [LARGE SCALE GENOMIC DNA]</scope>
    <source>
        <strain>PA1</strain>
    </source>
</reference>
<name>URED3_METEP</name>
<dbReference type="EMBL" id="CP000908">
    <property type="protein sequence ID" value="ABY31409.1"/>
    <property type="status" value="ALT_INIT"/>
    <property type="molecule type" value="Genomic_DNA"/>
</dbReference>
<dbReference type="SMR" id="A9W6X7"/>
<dbReference type="KEGG" id="mex:Mext_3020"/>
<dbReference type="eggNOG" id="COG0829">
    <property type="taxonomic scope" value="Bacteria"/>
</dbReference>
<dbReference type="HOGENOM" id="CLU_056339_2_0_5"/>
<dbReference type="GO" id="GO:0005737">
    <property type="term" value="C:cytoplasm"/>
    <property type="evidence" value="ECO:0007669"/>
    <property type="project" value="UniProtKB-SubCell"/>
</dbReference>
<dbReference type="GO" id="GO:0016151">
    <property type="term" value="F:nickel cation binding"/>
    <property type="evidence" value="ECO:0007669"/>
    <property type="project" value="UniProtKB-UniRule"/>
</dbReference>
<dbReference type="HAMAP" id="MF_01384">
    <property type="entry name" value="UreD"/>
    <property type="match status" value="1"/>
</dbReference>
<dbReference type="InterPro" id="IPR002669">
    <property type="entry name" value="UreD"/>
</dbReference>
<dbReference type="PANTHER" id="PTHR33643">
    <property type="entry name" value="UREASE ACCESSORY PROTEIN D"/>
    <property type="match status" value="1"/>
</dbReference>
<dbReference type="PANTHER" id="PTHR33643:SF1">
    <property type="entry name" value="UREASE ACCESSORY PROTEIN D"/>
    <property type="match status" value="1"/>
</dbReference>
<dbReference type="Pfam" id="PF01774">
    <property type="entry name" value="UreD"/>
    <property type="match status" value="1"/>
</dbReference>
<sequence>MADEAGTRSAGGRPIPAAEPLRPALSRQRSQGAVHLRVAPAGTAADAPTRIVDLAESGPLRLRCPRQGAERMLEGVLVNTGGGIACGDVFTVSVTVEPGGACVLTTTAAEKIYRSDGPCAEIVNRASVGAGGRLDWLPQETILFDRARLVRRFEADLAPDASLLVAEIAVLGRAARGESLEQALFEDRWRIRRDGRLVYADSLRLDGAVTALMNRRAIGGGARALATILDLSLRAEGRLDEARALLDALPAQVEAGASAWNGHLAVRMLAPTVAPLRDAAARFLAAWRGQPMPRVWQT</sequence>
<accession>A9W6X7</accession>
<protein>
    <recommendedName>
        <fullName evidence="1">Urease accessory protein UreD 3</fullName>
    </recommendedName>
</protein>
<proteinExistence type="inferred from homology"/>
<gene>
    <name evidence="1" type="primary">ureD3</name>
    <name type="ordered locus">Mext_3020</name>
</gene>
<evidence type="ECO:0000255" key="1">
    <source>
        <dbReference type="HAMAP-Rule" id="MF_01384"/>
    </source>
</evidence>
<evidence type="ECO:0000256" key="2">
    <source>
        <dbReference type="SAM" id="MobiDB-lite"/>
    </source>
</evidence>
<evidence type="ECO:0000305" key="3"/>
<organism>
    <name type="scientific">Methylorubrum extorquens (strain PA1)</name>
    <name type="common">Methylobacterium extorquens</name>
    <dbReference type="NCBI Taxonomy" id="419610"/>
    <lineage>
        <taxon>Bacteria</taxon>
        <taxon>Pseudomonadati</taxon>
        <taxon>Pseudomonadota</taxon>
        <taxon>Alphaproteobacteria</taxon>
        <taxon>Hyphomicrobiales</taxon>
        <taxon>Methylobacteriaceae</taxon>
        <taxon>Methylorubrum</taxon>
    </lineage>
</organism>
<feature type="chain" id="PRO_0000346574" description="Urease accessory protein UreD 3">
    <location>
        <begin position="1"/>
        <end position="298"/>
    </location>
</feature>
<feature type="region of interest" description="Disordered" evidence="2">
    <location>
        <begin position="1"/>
        <end position="30"/>
    </location>
</feature>
<keyword id="KW-0143">Chaperone</keyword>
<keyword id="KW-0963">Cytoplasm</keyword>
<keyword id="KW-0996">Nickel insertion</keyword>
<comment type="function">
    <text evidence="1">Required for maturation of urease via the functional incorporation of the urease nickel metallocenter.</text>
</comment>
<comment type="subunit">
    <text evidence="1">UreD, UreF and UreG form a complex that acts as a GTP-hydrolysis-dependent molecular chaperone, activating the urease apoprotein by helping to assemble the nickel containing metallocenter of UreC. The UreE protein probably delivers the nickel.</text>
</comment>
<comment type="subcellular location">
    <subcellularLocation>
        <location evidence="1">Cytoplasm</location>
    </subcellularLocation>
</comment>
<comment type="similarity">
    <text evidence="1">Belongs to the UreD family.</text>
</comment>
<comment type="sequence caution" evidence="3">
    <conflict type="erroneous initiation">
        <sequence resource="EMBL-CDS" id="ABY31409"/>
    </conflict>
</comment>